<keyword id="KW-0104">Cadmium</keyword>
<keyword id="KW-0186">Copper</keyword>
<keyword id="KW-0476">Mercury</keyword>
<keyword id="KW-0479">Metal-binding</keyword>
<keyword id="KW-1185">Reference proteome</keyword>
<keyword id="KW-0862">Zinc</keyword>
<organism>
    <name type="scientific">Drosophila melanogaster</name>
    <name type="common">Fruit fly</name>
    <dbReference type="NCBI Taxonomy" id="7227"/>
    <lineage>
        <taxon>Eukaryota</taxon>
        <taxon>Metazoa</taxon>
        <taxon>Ecdysozoa</taxon>
        <taxon>Arthropoda</taxon>
        <taxon>Hexapoda</taxon>
        <taxon>Insecta</taxon>
        <taxon>Pterygota</taxon>
        <taxon>Neoptera</taxon>
        <taxon>Endopterygota</taxon>
        <taxon>Diptera</taxon>
        <taxon>Brachycera</taxon>
        <taxon>Muscomorpha</taxon>
        <taxon>Ephydroidea</taxon>
        <taxon>Drosophilidae</taxon>
        <taxon>Drosophila</taxon>
        <taxon>Sophophora</taxon>
    </lineage>
</organism>
<evidence type="ECO:0000269" key="1">
    <source>
    </source>
</evidence>
<evidence type="ECO:0000269" key="2">
    <source>
    </source>
</evidence>
<evidence type="ECO:0000305" key="3"/>
<dbReference type="EMBL" id="K02314">
    <property type="protein sequence ID" value="AAA28681.1"/>
    <property type="molecule type" value="mRNA"/>
</dbReference>
<dbReference type="EMBL" id="M27708">
    <property type="protein sequence ID" value="AAA28684.1"/>
    <property type="molecule type" value="Genomic_DNA"/>
</dbReference>
<dbReference type="EMBL" id="X03758">
    <property type="protein sequence ID" value="CAA27391.1"/>
    <property type="molecule type" value="Genomic_DNA"/>
</dbReference>
<dbReference type="EMBL" id="M69015">
    <property type="protein sequence ID" value="AAB41334.1"/>
    <property type="molecule type" value="Genomic_DNA"/>
</dbReference>
<dbReference type="EMBL" id="EU744337">
    <property type="protein sequence ID" value="ACH73302.1"/>
    <property type="molecule type" value="Genomic_DNA"/>
</dbReference>
<dbReference type="EMBL" id="EU744338">
    <property type="protein sequence ID" value="ACH73303.1"/>
    <property type="molecule type" value="Genomic_DNA"/>
</dbReference>
<dbReference type="EMBL" id="EU744339">
    <property type="protein sequence ID" value="ACH73304.1"/>
    <property type="molecule type" value="Genomic_DNA"/>
</dbReference>
<dbReference type="EMBL" id="EU744340">
    <property type="protein sequence ID" value="ACH73305.1"/>
    <property type="molecule type" value="Genomic_DNA"/>
</dbReference>
<dbReference type="EMBL" id="EU744341">
    <property type="protein sequence ID" value="ACH73306.1"/>
    <property type="molecule type" value="Genomic_DNA"/>
</dbReference>
<dbReference type="EMBL" id="EU744342">
    <property type="protein sequence ID" value="ACH73307.1"/>
    <property type="molecule type" value="Genomic_DNA"/>
</dbReference>
<dbReference type="EMBL" id="EU744343">
    <property type="protein sequence ID" value="ACH73308.1"/>
    <property type="molecule type" value="Genomic_DNA"/>
</dbReference>
<dbReference type="EMBL" id="EU744344">
    <property type="protein sequence ID" value="ACH73309.1"/>
    <property type="molecule type" value="Genomic_DNA"/>
</dbReference>
<dbReference type="EMBL" id="EU744345">
    <property type="protein sequence ID" value="ACH73310.1"/>
    <property type="molecule type" value="Genomic_DNA"/>
</dbReference>
<dbReference type="EMBL" id="EU744346">
    <property type="protein sequence ID" value="ACH73311.1"/>
    <property type="molecule type" value="Genomic_DNA"/>
</dbReference>
<dbReference type="EMBL" id="EU744347">
    <property type="protein sequence ID" value="ACH73312.1"/>
    <property type="molecule type" value="Genomic_DNA"/>
</dbReference>
<dbReference type="EMBL" id="EU744348">
    <property type="protein sequence ID" value="ACH73313.1"/>
    <property type="molecule type" value="Genomic_DNA"/>
</dbReference>
<dbReference type="EMBL" id="EU744349">
    <property type="protein sequence ID" value="ACH73314.1"/>
    <property type="molecule type" value="Genomic_DNA"/>
</dbReference>
<dbReference type="EMBL" id="EU744350">
    <property type="protein sequence ID" value="ACH73315.1"/>
    <property type="molecule type" value="Genomic_DNA"/>
</dbReference>
<dbReference type="EMBL" id="AE014297">
    <property type="protein sequence ID" value="AAF54452.1"/>
    <property type="molecule type" value="Genomic_DNA"/>
</dbReference>
<dbReference type="EMBL" id="BT001431">
    <property type="protein sequence ID" value="AAN71186.1"/>
    <property type="molecule type" value="mRNA"/>
</dbReference>
<dbReference type="PIR" id="A25294">
    <property type="entry name" value="SMFF"/>
</dbReference>
<dbReference type="RefSeq" id="NP_001262438.1">
    <property type="nucleotide sequence ID" value="NM_001275509.1"/>
</dbReference>
<dbReference type="RefSeq" id="NP_524299.1">
    <property type="nucleotide sequence ID" value="NM_079575.2"/>
</dbReference>
<dbReference type="BioGRID" id="66359">
    <property type="interactions" value="10"/>
</dbReference>
<dbReference type="DIP" id="DIP-19543N"/>
<dbReference type="FunCoup" id="P04357">
    <property type="interactions" value="1"/>
</dbReference>
<dbReference type="IntAct" id="P04357">
    <property type="interactions" value="1"/>
</dbReference>
<dbReference type="STRING" id="7227.FBpp0306744"/>
<dbReference type="PaxDb" id="7227-FBpp0081636"/>
<dbReference type="DNASU" id="41202"/>
<dbReference type="EnsemblMetazoa" id="FBtr0082158">
    <property type="protein sequence ID" value="FBpp0081636"/>
    <property type="gene ID" value="FBgn0002868"/>
</dbReference>
<dbReference type="EnsemblMetazoa" id="FBtr0334686">
    <property type="protein sequence ID" value="FBpp0306744"/>
    <property type="gene ID" value="FBgn0002868"/>
</dbReference>
<dbReference type="GeneID" id="41202"/>
<dbReference type="KEGG" id="dme:Dmel_CG9470"/>
<dbReference type="AGR" id="FB:FBgn0002868"/>
<dbReference type="CTD" id="41202"/>
<dbReference type="FlyBase" id="FBgn0002868">
    <property type="gene designation" value="MtnA"/>
</dbReference>
<dbReference type="VEuPathDB" id="VectorBase:FBgn0002868"/>
<dbReference type="eggNOG" id="KOG4738">
    <property type="taxonomic scope" value="Eukaryota"/>
</dbReference>
<dbReference type="HOGENOM" id="CLU_200785_3_0_1"/>
<dbReference type="InParanoid" id="P04357"/>
<dbReference type="OrthoDB" id="7831889at2759"/>
<dbReference type="PhylomeDB" id="P04357"/>
<dbReference type="BioGRID-ORCS" id="41202">
    <property type="hits" value="0 hits in 1 CRISPR screen"/>
</dbReference>
<dbReference type="ChiTaRS" id="MtnA">
    <property type="organism name" value="fly"/>
</dbReference>
<dbReference type="GenomeRNAi" id="41202"/>
<dbReference type="PRO" id="PR:P04357"/>
<dbReference type="Proteomes" id="UP000000803">
    <property type="component" value="Chromosome 3R"/>
</dbReference>
<dbReference type="Bgee" id="FBgn0002868">
    <property type="expression patterns" value="Expressed in adult Malpighian tubule (Drosophila) and 259 other cell types or tissues"/>
</dbReference>
<dbReference type="ExpressionAtlas" id="P04357">
    <property type="expression patterns" value="baseline and differential"/>
</dbReference>
<dbReference type="GO" id="GO:0046872">
    <property type="term" value="F:metal ion binding"/>
    <property type="evidence" value="ECO:0000314"/>
    <property type="project" value="FlyBase"/>
</dbReference>
<dbReference type="GO" id="GO:0140961">
    <property type="term" value="P:cellular detoxification of metal ion"/>
    <property type="evidence" value="ECO:0000315"/>
    <property type="project" value="FlyBase"/>
</dbReference>
<dbReference type="GO" id="GO:0010038">
    <property type="term" value="P:response to metal ion"/>
    <property type="evidence" value="ECO:0000314"/>
    <property type="project" value="FlyBase"/>
</dbReference>
<dbReference type="InterPro" id="IPR000966">
    <property type="entry name" value="Metalthion_5"/>
</dbReference>
<dbReference type="Pfam" id="PF02067">
    <property type="entry name" value="Metallothio_5"/>
    <property type="match status" value="1"/>
</dbReference>
<dbReference type="PRINTS" id="PR00872">
    <property type="entry name" value="MTDIPTERA"/>
</dbReference>
<protein>
    <recommendedName>
        <fullName>Metallothionein-1</fullName>
        <shortName>MT-1</shortName>
    </recommendedName>
</protein>
<gene>
    <name type="primary">MtnA</name>
    <name type="ORF">CG9470</name>
</gene>
<feature type="chain" id="PRO_0000197353" description="Metallothionein-1">
    <location>
        <begin position="1"/>
        <end position="40"/>
    </location>
</feature>
<feature type="sequence variant" description="In allele MtnA-3 and strain: AF6, Highgrove, Indiana, LA20, Taiwan, ZH18, ZH21, ZH27, ZS11, ZS30 and ZS56." evidence="1 2">
    <original>E</original>
    <variation>K</variation>
    <location>
        <position position="40"/>
    </location>
</feature>
<proteinExistence type="evidence at transcript level"/>
<name>MT1_DROME</name>
<comment type="function">
    <text>This protein binds cations of several transition elements. It is thought to be involved in detoxification processes.</text>
</comment>
<comment type="developmental stage">
    <text>Late embryogenesis, larva and adult.</text>
</comment>
<comment type="induction">
    <text>Strongly induced by cadmium, copper and mercury.</text>
</comment>
<comment type="domain">
    <text>All cysteine residues are arranged in C-X-C groups. These are thought to be the metal-binding sites in other metallothioneins.</text>
</comment>
<comment type="similarity">
    <text evidence="3">Belongs to the metallothionein superfamily. Type 5 family.</text>
</comment>
<reference key="1">
    <citation type="journal article" date="1985" name="J. Biol. Chem.">
        <title>Nucleotide sequence and expression of a Drosophila metallothionein.</title>
        <authorList>
            <person name="Lastowski-Perry D."/>
            <person name="Otto E."/>
            <person name="Maroni G."/>
        </authorList>
    </citation>
    <scope>NUCLEOTIDE SEQUENCE [MRNA]</scope>
</reference>
<reference key="2">
    <citation type="journal article" date="1986" name="Environ. Health Perspect.">
        <title>Effects of heavy metals on Drosophila larvae and a metallothionein cDNA.</title>
        <authorList>
            <person name="Maroni G."/>
            <person name="Lastowski-Perry D."/>
            <person name="Otto E."/>
            <person name="Watson D."/>
        </authorList>
    </citation>
    <scope>NUCLEOTIDE SEQUENCE [MRNA]</scope>
</reference>
<reference key="3">
    <citation type="journal article" date="1986" name="Genetics">
        <title>Molecular and cytogenetic characterization of a metallothionein gene of Drosophila.</title>
        <authorList>
            <person name="Maroni G."/>
            <person name="Otto E."/>
            <person name="Lastowski-Perry D."/>
        </authorList>
    </citation>
    <scope>NUCLEOTIDE SEQUENCE [GENOMIC DNA]</scope>
</reference>
<reference key="4">
    <citation type="journal article" date="1987" name="Experientia Suppl.">
        <title>The metallothionein gene of Drosophila.</title>
        <authorList>
            <person name="Maroni G."/>
            <person name="Otto E."/>
            <person name="Lastowski-Perry D."/>
            <person name="Price D.H."/>
        </authorList>
    </citation>
    <scope>NUCLEOTIDE SEQUENCE [GENOMIC DNA]</scope>
</reference>
<reference key="5">
    <citation type="journal article" date="1991" name="Genet. Res.">
        <title>Recent evolutionary history of the metallothionein gene Mtn in Drosophila.</title>
        <authorList>
            <person name="Theodore L."/>
            <person name="Ho A.-S."/>
            <person name="Maroni G."/>
        </authorList>
    </citation>
    <scope>NUCLEOTIDE SEQUENCE [GENOMIC DNA]</scope>
    <scope>VARIANT LYS-40</scope>
</reference>
<reference key="6">
    <citation type="journal article" date="2008" name="Genes Genet. Syst.">
        <title>Decoupled differentiation of gene expression and coding sequence among Drosophila populations.</title>
        <authorList>
            <person name="Kohn M.H."/>
            <person name="Shapiro J."/>
            <person name="Wu C.I."/>
        </authorList>
    </citation>
    <scope>NUCLEOTIDE SEQUENCE [GENOMIC DNA]</scope>
    <scope>VARIANT LYS-40</scope>
    <source>
        <strain>AF6</strain>
        <strain>Canton-S</strain>
        <strain>France</strain>
        <strain>Highgrove</strain>
        <strain>Indiana</strain>
        <strain>LA20</strain>
        <strain>LA66</strain>
        <strain>Taiwan</strain>
        <strain>ZH18</strain>
        <strain>ZH21</strain>
        <strain>ZH27</strain>
        <strain>ZS11</strain>
        <strain>ZS30</strain>
        <strain>ZS56</strain>
    </source>
</reference>
<reference key="7">
    <citation type="journal article" date="2000" name="Science">
        <title>The genome sequence of Drosophila melanogaster.</title>
        <authorList>
            <person name="Adams M.D."/>
            <person name="Celniker S.E."/>
            <person name="Holt R.A."/>
            <person name="Evans C.A."/>
            <person name="Gocayne J.D."/>
            <person name="Amanatides P.G."/>
            <person name="Scherer S.E."/>
            <person name="Li P.W."/>
            <person name="Hoskins R.A."/>
            <person name="Galle R.F."/>
            <person name="George R.A."/>
            <person name="Lewis S.E."/>
            <person name="Richards S."/>
            <person name="Ashburner M."/>
            <person name="Henderson S.N."/>
            <person name="Sutton G.G."/>
            <person name="Wortman J.R."/>
            <person name="Yandell M.D."/>
            <person name="Zhang Q."/>
            <person name="Chen L.X."/>
            <person name="Brandon R.C."/>
            <person name="Rogers Y.-H.C."/>
            <person name="Blazej R.G."/>
            <person name="Champe M."/>
            <person name="Pfeiffer B.D."/>
            <person name="Wan K.H."/>
            <person name="Doyle C."/>
            <person name="Baxter E.G."/>
            <person name="Helt G."/>
            <person name="Nelson C.R."/>
            <person name="Miklos G.L.G."/>
            <person name="Abril J.F."/>
            <person name="Agbayani A."/>
            <person name="An H.-J."/>
            <person name="Andrews-Pfannkoch C."/>
            <person name="Baldwin D."/>
            <person name="Ballew R.M."/>
            <person name="Basu A."/>
            <person name="Baxendale J."/>
            <person name="Bayraktaroglu L."/>
            <person name="Beasley E.M."/>
            <person name="Beeson K.Y."/>
            <person name="Benos P.V."/>
            <person name="Berman B.P."/>
            <person name="Bhandari D."/>
            <person name="Bolshakov S."/>
            <person name="Borkova D."/>
            <person name="Botchan M.R."/>
            <person name="Bouck J."/>
            <person name="Brokstein P."/>
            <person name="Brottier P."/>
            <person name="Burtis K.C."/>
            <person name="Busam D.A."/>
            <person name="Butler H."/>
            <person name="Cadieu E."/>
            <person name="Center A."/>
            <person name="Chandra I."/>
            <person name="Cherry J.M."/>
            <person name="Cawley S."/>
            <person name="Dahlke C."/>
            <person name="Davenport L.B."/>
            <person name="Davies P."/>
            <person name="de Pablos B."/>
            <person name="Delcher A."/>
            <person name="Deng Z."/>
            <person name="Mays A.D."/>
            <person name="Dew I."/>
            <person name="Dietz S.M."/>
            <person name="Dodson K."/>
            <person name="Doup L.E."/>
            <person name="Downes M."/>
            <person name="Dugan-Rocha S."/>
            <person name="Dunkov B.C."/>
            <person name="Dunn P."/>
            <person name="Durbin K.J."/>
            <person name="Evangelista C.C."/>
            <person name="Ferraz C."/>
            <person name="Ferriera S."/>
            <person name="Fleischmann W."/>
            <person name="Fosler C."/>
            <person name="Gabrielian A.E."/>
            <person name="Garg N.S."/>
            <person name="Gelbart W.M."/>
            <person name="Glasser K."/>
            <person name="Glodek A."/>
            <person name="Gong F."/>
            <person name="Gorrell J.H."/>
            <person name="Gu Z."/>
            <person name="Guan P."/>
            <person name="Harris M."/>
            <person name="Harris N.L."/>
            <person name="Harvey D.A."/>
            <person name="Heiman T.J."/>
            <person name="Hernandez J.R."/>
            <person name="Houck J."/>
            <person name="Hostin D."/>
            <person name="Houston K.A."/>
            <person name="Howland T.J."/>
            <person name="Wei M.-H."/>
            <person name="Ibegwam C."/>
            <person name="Jalali M."/>
            <person name="Kalush F."/>
            <person name="Karpen G.H."/>
            <person name="Ke Z."/>
            <person name="Kennison J.A."/>
            <person name="Ketchum K.A."/>
            <person name="Kimmel B.E."/>
            <person name="Kodira C.D."/>
            <person name="Kraft C.L."/>
            <person name="Kravitz S."/>
            <person name="Kulp D."/>
            <person name="Lai Z."/>
            <person name="Lasko P."/>
            <person name="Lei Y."/>
            <person name="Levitsky A.A."/>
            <person name="Li J.H."/>
            <person name="Li Z."/>
            <person name="Liang Y."/>
            <person name="Lin X."/>
            <person name="Liu X."/>
            <person name="Mattei B."/>
            <person name="McIntosh T.C."/>
            <person name="McLeod M.P."/>
            <person name="McPherson D."/>
            <person name="Merkulov G."/>
            <person name="Milshina N.V."/>
            <person name="Mobarry C."/>
            <person name="Morris J."/>
            <person name="Moshrefi A."/>
            <person name="Mount S.M."/>
            <person name="Moy M."/>
            <person name="Murphy B."/>
            <person name="Murphy L."/>
            <person name="Muzny D.M."/>
            <person name="Nelson D.L."/>
            <person name="Nelson D.R."/>
            <person name="Nelson K.A."/>
            <person name="Nixon K."/>
            <person name="Nusskern D.R."/>
            <person name="Pacleb J.M."/>
            <person name="Palazzolo M."/>
            <person name="Pittman G.S."/>
            <person name="Pan S."/>
            <person name="Pollard J."/>
            <person name="Puri V."/>
            <person name="Reese M.G."/>
            <person name="Reinert K."/>
            <person name="Remington K."/>
            <person name="Saunders R.D.C."/>
            <person name="Scheeler F."/>
            <person name="Shen H."/>
            <person name="Shue B.C."/>
            <person name="Siden-Kiamos I."/>
            <person name="Simpson M."/>
            <person name="Skupski M.P."/>
            <person name="Smith T.J."/>
            <person name="Spier E."/>
            <person name="Spradling A.C."/>
            <person name="Stapleton M."/>
            <person name="Strong R."/>
            <person name="Sun E."/>
            <person name="Svirskas R."/>
            <person name="Tector C."/>
            <person name="Turner R."/>
            <person name="Venter E."/>
            <person name="Wang A.H."/>
            <person name="Wang X."/>
            <person name="Wang Z.-Y."/>
            <person name="Wassarman D.A."/>
            <person name="Weinstock G.M."/>
            <person name="Weissenbach J."/>
            <person name="Williams S.M."/>
            <person name="Woodage T."/>
            <person name="Worley K.C."/>
            <person name="Wu D."/>
            <person name="Yang S."/>
            <person name="Yao Q.A."/>
            <person name="Ye J."/>
            <person name="Yeh R.-F."/>
            <person name="Zaveri J.S."/>
            <person name="Zhan M."/>
            <person name="Zhang G."/>
            <person name="Zhao Q."/>
            <person name="Zheng L."/>
            <person name="Zheng X.H."/>
            <person name="Zhong F.N."/>
            <person name="Zhong W."/>
            <person name="Zhou X."/>
            <person name="Zhu S.C."/>
            <person name="Zhu X."/>
            <person name="Smith H.O."/>
            <person name="Gibbs R.A."/>
            <person name="Myers E.W."/>
            <person name="Rubin G.M."/>
            <person name="Venter J.C."/>
        </authorList>
    </citation>
    <scope>NUCLEOTIDE SEQUENCE [LARGE SCALE GENOMIC DNA]</scope>
    <source>
        <strain>Berkeley</strain>
    </source>
</reference>
<reference key="8">
    <citation type="journal article" date="2002" name="Genome Biol.">
        <title>Annotation of the Drosophila melanogaster euchromatic genome: a systematic review.</title>
        <authorList>
            <person name="Misra S."/>
            <person name="Crosby M.A."/>
            <person name="Mungall C.J."/>
            <person name="Matthews B.B."/>
            <person name="Campbell K.S."/>
            <person name="Hradecky P."/>
            <person name="Huang Y."/>
            <person name="Kaminker J.S."/>
            <person name="Millburn G.H."/>
            <person name="Prochnik S.E."/>
            <person name="Smith C.D."/>
            <person name="Tupy J.L."/>
            <person name="Whitfield E.J."/>
            <person name="Bayraktaroglu L."/>
            <person name="Berman B.P."/>
            <person name="Bettencourt B.R."/>
            <person name="Celniker S.E."/>
            <person name="de Grey A.D.N.J."/>
            <person name="Drysdale R.A."/>
            <person name="Harris N.L."/>
            <person name="Richter J."/>
            <person name="Russo S."/>
            <person name="Schroeder A.J."/>
            <person name="Shu S.Q."/>
            <person name="Stapleton M."/>
            <person name="Yamada C."/>
            <person name="Ashburner M."/>
            <person name="Gelbart W.M."/>
            <person name="Rubin G.M."/>
            <person name="Lewis S.E."/>
        </authorList>
    </citation>
    <scope>GENOME REANNOTATION</scope>
    <source>
        <strain>Berkeley</strain>
    </source>
</reference>
<reference key="9">
    <citation type="journal article" date="2002" name="Genome Biol.">
        <title>A Drosophila full-length cDNA resource.</title>
        <authorList>
            <person name="Stapleton M."/>
            <person name="Carlson J.W."/>
            <person name="Brokstein P."/>
            <person name="Yu C."/>
            <person name="Champe M."/>
            <person name="George R.A."/>
            <person name="Guarin H."/>
            <person name="Kronmiller B."/>
            <person name="Pacleb J.M."/>
            <person name="Park S."/>
            <person name="Wan K.H."/>
            <person name="Rubin G.M."/>
            <person name="Celniker S.E."/>
        </authorList>
    </citation>
    <scope>NUCLEOTIDE SEQUENCE [LARGE SCALE MRNA]</scope>
    <source>
        <strain>Berkeley</strain>
        <tissue>Head</tissue>
    </source>
</reference>
<reference key="10">
    <citation type="journal article" date="1990" name="J. Mol. Biol.">
        <title>Metallothionein Mto gene of Drosophila melanogaster: structure and regulation.</title>
        <authorList>
            <person name="Silar P."/>
            <person name="Theodore L."/>
            <person name="Mokdad R."/>
            <person name="Erraiss N.-E."/>
            <person name="Cadic A."/>
            <person name="Wegnez M."/>
        </authorList>
    </citation>
    <scope>REGULATION</scope>
    <scope>EXPRESSION</scope>
</reference>
<accession>P04357</accession>
<accession>B5T1U3</accession>
<accession>B5T1U5</accession>
<accession>Q9VH67</accession>
<sequence length="40" mass="3853">MPCPCGSGCKCASQATKGSCNCGSDCKCGGDKKSACGCSE</sequence>